<proteinExistence type="inferred from homology"/>
<reference key="1">
    <citation type="journal article" date="2003" name="Mol. Microbiol.">
        <title>Genome-based analysis of virulence genes in a non-biofilm-forming Staphylococcus epidermidis strain (ATCC 12228).</title>
        <authorList>
            <person name="Zhang Y.-Q."/>
            <person name="Ren S.-X."/>
            <person name="Li H.-L."/>
            <person name="Wang Y.-X."/>
            <person name="Fu G."/>
            <person name="Yang J."/>
            <person name="Qin Z.-Q."/>
            <person name="Miao Y.-G."/>
            <person name="Wang W.-Y."/>
            <person name="Chen R.-S."/>
            <person name="Shen Y."/>
            <person name="Chen Z."/>
            <person name="Yuan Z.-H."/>
            <person name="Zhao G.-P."/>
            <person name="Qu D."/>
            <person name="Danchin A."/>
            <person name="Wen Y.-M."/>
        </authorList>
    </citation>
    <scope>NUCLEOTIDE SEQUENCE [LARGE SCALE GENOMIC DNA]</scope>
    <source>
        <strain>ATCC 12228 / FDA PCI 1200</strain>
    </source>
</reference>
<evidence type="ECO:0000250" key="1"/>
<evidence type="ECO:0000255" key="2">
    <source>
        <dbReference type="PROSITE-ProRule" id="PRU00660"/>
    </source>
</evidence>
<evidence type="ECO:0000305" key="3"/>
<accession>P0C0P1</accession>
<accession>Q59908</accession>
<keyword id="KW-0521">NADP</keyword>
<keyword id="KW-0554">One-carbon metabolism</keyword>
<keyword id="KW-0560">Oxidoreductase</keyword>
<comment type="function">
    <text evidence="1">Key enzyme in folate metabolism. Catalyzes an essential reaction for de novo glycine and purine synthesis, and for DNA precursor synthesis (By similarity).</text>
</comment>
<comment type="catalytic activity">
    <reaction evidence="2">
        <text>(6S)-5,6,7,8-tetrahydrofolate + NADP(+) = 7,8-dihydrofolate + NADPH + H(+)</text>
        <dbReference type="Rhea" id="RHEA:15009"/>
        <dbReference type="ChEBI" id="CHEBI:15378"/>
        <dbReference type="ChEBI" id="CHEBI:57451"/>
        <dbReference type="ChEBI" id="CHEBI:57453"/>
        <dbReference type="ChEBI" id="CHEBI:57783"/>
        <dbReference type="ChEBI" id="CHEBI:58349"/>
        <dbReference type="EC" id="1.5.1.3"/>
    </reaction>
</comment>
<comment type="pathway">
    <text>Cofactor biosynthesis; tetrahydrofolate biosynthesis; 5,6,7,8-tetrahydrofolate from 7,8-dihydrofolate: step 1/1.</text>
</comment>
<comment type="similarity">
    <text evidence="3">Belongs to the dihydrofolate reductase family.</text>
</comment>
<sequence length="161" mass="18417">MTLSIIVAHDKQRVIGYQNQLPWHLPNDLKHVKQLTTGNTLVMGRKTFNSIGKPLPNRRNVVLTNQASFHHEGVDVINSLDEIKELSGHVFIFGGQTLFEAMIDQVDDMYITVIDGKFQGDTFFPPYTFENWEVESSVEGQLDEKNTIPHTFLHLVRRKGK</sequence>
<gene>
    <name type="primary">folA</name>
    <name type="synonym">dfrC</name>
    <name type="synonym">folA1</name>
    <name type="ordered locus">SE_1119</name>
</gene>
<protein>
    <recommendedName>
        <fullName>Dihydrofolate reductase</fullName>
        <shortName>DHFR</shortName>
        <ecNumber>1.5.1.3</ecNumber>
    </recommendedName>
</protein>
<name>DYR_STAES</name>
<feature type="chain" id="PRO_0000186414" description="Dihydrofolate reductase">
    <location>
        <begin position="1"/>
        <end position="161"/>
    </location>
</feature>
<feature type="domain" description="DHFR" evidence="2">
    <location>
        <begin position="2"/>
        <end position="157"/>
    </location>
</feature>
<feature type="binding site" evidence="1">
    <location>
        <begin position="6"/>
        <end position="8"/>
    </location>
    <ligand>
        <name>substrate</name>
    </ligand>
</feature>
<feature type="binding site" evidence="1">
    <location>
        <begin position="7"/>
        <end position="8"/>
    </location>
    <ligand>
        <name>NADP(+)</name>
        <dbReference type="ChEBI" id="CHEBI:58349"/>
    </ligand>
</feature>
<feature type="binding site" evidence="1">
    <location>
        <begin position="15"/>
        <end position="20"/>
    </location>
    <ligand>
        <name>NADP(+)</name>
        <dbReference type="ChEBI" id="CHEBI:58349"/>
    </ligand>
</feature>
<feature type="binding site" evidence="1">
    <location>
        <position position="28"/>
    </location>
    <ligand>
        <name>substrate</name>
    </ligand>
</feature>
<feature type="binding site" evidence="1">
    <location>
        <begin position="44"/>
        <end position="47"/>
    </location>
    <ligand>
        <name>NADP(+)</name>
        <dbReference type="ChEBI" id="CHEBI:58349"/>
    </ligand>
</feature>
<feature type="binding site" evidence="1">
    <location>
        <position position="58"/>
    </location>
    <ligand>
        <name>substrate</name>
    </ligand>
</feature>
<feature type="binding site" evidence="1">
    <location>
        <begin position="63"/>
        <end position="66"/>
    </location>
    <ligand>
        <name>NADP(+)</name>
        <dbReference type="ChEBI" id="CHEBI:58349"/>
    </ligand>
</feature>
<feature type="binding site" evidence="1">
    <location>
        <begin position="93"/>
        <end position="98"/>
    </location>
    <ligand>
        <name>NADP(+)</name>
        <dbReference type="ChEBI" id="CHEBI:58349"/>
    </ligand>
</feature>
<feature type="binding site" evidence="1">
    <location>
        <position position="112"/>
    </location>
    <ligand>
        <name>substrate</name>
    </ligand>
</feature>
<dbReference type="EC" id="1.5.1.3"/>
<dbReference type="EMBL" id="AE015929">
    <property type="protein sequence ID" value="AAO04716.1"/>
    <property type="molecule type" value="Genomic_DNA"/>
</dbReference>
<dbReference type="RefSeq" id="NP_764674.1">
    <property type="nucleotide sequence ID" value="NC_004461.1"/>
</dbReference>
<dbReference type="RefSeq" id="WP_001830952.1">
    <property type="nucleotide sequence ID" value="NZ_WBME01000002.1"/>
</dbReference>
<dbReference type="SMR" id="P0C0P1"/>
<dbReference type="CARD" id="ARO:3002865">
    <property type="molecule name" value="dfrC"/>
    <property type="mechanism identifier" value="ARO:0001002"/>
    <property type="mechanism name" value="antibiotic target replacement"/>
</dbReference>
<dbReference type="GeneID" id="50018758"/>
<dbReference type="KEGG" id="sep:SE_1119"/>
<dbReference type="PATRIC" id="fig|176280.10.peg.1092"/>
<dbReference type="eggNOG" id="COG0262">
    <property type="taxonomic scope" value="Bacteria"/>
</dbReference>
<dbReference type="HOGENOM" id="CLU_043966_5_1_9"/>
<dbReference type="OrthoDB" id="9804315at2"/>
<dbReference type="UniPathway" id="UPA00077">
    <property type="reaction ID" value="UER00158"/>
</dbReference>
<dbReference type="Proteomes" id="UP000001411">
    <property type="component" value="Chromosome"/>
</dbReference>
<dbReference type="GO" id="GO:0005829">
    <property type="term" value="C:cytosol"/>
    <property type="evidence" value="ECO:0007669"/>
    <property type="project" value="TreeGrafter"/>
</dbReference>
<dbReference type="GO" id="GO:0004146">
    <property type="term" value="F:dihydrofolate reductase activity"/>
    <property type="evidence" value="ECO:0007669"/>
    <property type="project" value="UniProtKB-EC"/>
</dbReference>
<dbReference type="GO" id="GO:0050661">
    <property type="term" value="F:NADP binding"/>
    <property type="evidence" value="ECO:0007669"/>
    <property type="project" value="InterPro"/>
</dbReference>
<dbReference type="GO" id="GO:0046452">
    <property type="term" value="P:dihydrofolate metabolic process"/>
    <property type="evidence" value="ECO:0007669"/>
    <property type="project" value="TreeGrafter"/>
</dbReference>
<dbReference type="GO" id="GO:0046655">
    <property type="term" value="P:folic acid metabolic process"/>
    <property type="evidence" value="ECO:0007669"/>
    <property type="project" value="TreeGrafter"/>
</dbReference>
<dbReference type="GO" id="GO:0006730">
    <property type="term" value="P:one-carbon metabolic process"/>
    <property type="evidence" value="ECO:0007669"/>
    <property type="project" value="UniProtKB-KW"/>
</dbReference>
<dbReference type="GO" id="GO:0046654">
    <property type="term" value="P:tetrahydrofolate biosynthetic process"/>
    <property type="evidence" value="ECO:0007669"/>
    <property type="project" value="UniProtKB-UniPathway"/>
</dbReference>
<dbReference type="CDD" id="cd00209">
    <property type="entry name" value="DHFR"/>
    <property type="match status" value="1"/>
</dbReference>
<dbReference type="FunFam" id="3.40.430.10:FF:000001">
    <property type="entry name" value="Dihydrofolate reductase"/>
    <property type="match status" value="1"/>
</dbReference>
<dbReference type="Gene3D" id="3.40.430.10">
    <property type="entry name" value="Dihydrofolate Reductase, subunit A"/>
    <property type="match status" value="1"/>
</dbReference>
<dbReference type="InterPro" id="IPR012259">
    <property type="entry name" value="DHFR"/>
</dbReference>
<dbReference type="InterPro" id="IPR024072">
    <property type="entry name" value="DHFR-like_dom_sf"/>
</dbReference>
<dbReference type="InterPro" id="IPR017925">
    <property type="entry name" value="DHFR_CS"/>
</dbReference>
<dbReference type="InterPro" id="IPR001796">
    <property type="entry name" value="DHFR_dom"/>
</dbReference>
<dbReference type="NCBIfam" id="NF000155">
    <property type="entry name" value="trim_DfrC"/>
    <property type="match status" value="1"/>
</dbReference>
<dbReference type="PANTHER" id="PTHR48069">
    <property type="entry name" value="DIHYDROFOLATE REDUCTASE"/>
    <property type="match status" value="1"/>
</dbReference>
<dbReference type="PANTHER" id="PTHR48069:SF3">
    <property type="entry name" value="DIHYDROFOLATE REDUCTASE"/>
    <property type="match status" value="1"/>
</dbReference>
<dbReference type="Pfam" id="PF00186">
    <property type="entry name" value="DHFR_1"/>
    <property type="match status" value="1"/>
</dbReference>
<dbReference type="PIRSF" id="PIRSF000194">
    <property type="entry name" value="DHFR"/>
    <property type="match status" value="1"/>
</dbReference>
<dbReference type="PRINTS" id="PR00070">
    <property type="entry name" value="DHFR"/>
</dbReference>
<dbReference type="SUPFAM" id="SSF53597">
    <property type="entry name" value="Dihydrofolate reductase-like"/>
    <property type="match status" value="1"/>
</dbReference>
<dbReference type="PROSITE" id="PS00075">
    <property type="entry name" value="DHFR_1"/>
    <property type="match status" value="1"/>
</dbReference>
<dbReference type="PROSITE" id="PS51330">
    <property type="entry name" value="DHFR_2"/>
    <property type="match status" value="1"/>
</dbReference>
<organism>
    <name type="scientific">Staphylococcus epidermidis (strain ATCC 12228 / FDA PCI 1200)</name>
    <dbReference type="NCBI Taxonomy" id="176280"/>
    <lineage>
        <taxon>Bacteria</taxon>
        <taxon>Bacillati</taxon>
        <taxon>Bacillota</taxon>
        <taxon>Bacilli</taxon>
        <taxon>Bacillales</taxon>
        <taxon>Staphylococcaceae</taxon>
        <taxon>Staphylococcus</taxon>
    </lineage>
</organism>